<organism>
    <name type="scientific">Brucella melitensis biotype 1 (strain ATCC 23456 / CCUG 17765 / NCTC 10094 / 16M)</name>
    <dbReference type="NCBI Taxonomy" id="224914"/>
    <lineage>
        <taxon>Bacteria</taxon>
        <taxon>Pseudomonadati</taxon>
        <taxon>Pseudomonadota</taxon>
        <taxon>Alphaproteobacteria</taxon>
        <taxon>Hyphomicrobiales</taxon>
        <taxon>Brucellaceae</taxon>
        <taxon>Brucella/Ochrobactrum group</taxon>
        <taxon>Brucella</taxon>
    </lineage>
</organism>
<protein>
    <recommendedName>
        <fullName evidence="1">Translation initiation factor IF-1</fullName>
    </recommendedName>
</protein>
<name>IF1_BRUME</name>
<dbReference type="EMBL" id="AE008917">
    <property type="protein sequence ID" value="AAL52852.1"/>
    <property type="status" value="ALT_INIT"/>
    <property type="molecule type" value="Genomic_DNA"/>
</dbReference>
<dbReference type="PIR" id="AI3460">
    <property type="entry name" value="AI3460"/>
</dbReference>
<dbReference type="RefSeq" id="WP_002965531.1">
    <property type="nucleotide sequence ID" value="NZ_GG703778.1"/>
</dbReference>
<dbReference type="SMR" id="P62923"/>
<dbReference type="GeneID" id="97534350"/>
<dbReference type="KEGG" id="bme:BMEI1671"/>
<dbReference type="KEGG" id="bmel:DK63_1819"/>
<dbReference type="PATRIC" id="fig|224914.52.peg.1920"/>
<dbReference type="eggNOG" id="COG0361">
    <property type="taxonomic scope" value="Bacteria"/>
</dbReference>
<dbReference type="Proteomes" id="UP000000419">
    <property type="component" value="Chromosome I"/>
</dbReference>
<dbReference type="GO" id="GO:0005829">
    <property type="term" value="C:cytosol"/>
    <property type="evidence" value="ECO:0007669"/>
    <property type="project" value="TreeGrafter"/>
</dbReference>
<dbReference type="GO" id="GO:0043022">
    <property type="term" value="F:ribosome binding"/>
    <property type="evidence" value="ECO:0007669"/>
    <property type="project" value="UniProtKB-UniRule"/>
</dbReference>
<dbReference type="GO" id="GO:0019843">
    <property type="term" value="F:rRNA binding"/>
    <property type="evidence" value="ECO:0007669"/>
    <property type="project" value="UniProtKB-UniRule"/>
</dbReference>
<dbReference type="GO" id="GO:0003743">
    <property type="term" value="F:translation initiation factor activity"/>
    <property type="evidence" value="ECO:0007669"/>
    <property type="project" value="UniProtKB-UniRule"/>
</dbReference>
<dbReference type="CDD" id="cd04451">
    <property type="entry name" value="S1_IF1"/>
    <property type="match status" value="1"/>
</dbReference>
<dbReference type="FunFam" id="2.40.50.140:FF:000002">
    <property type="entry name" value="Translation initiation factor IF-1"/>
    <property type="match status" value="1"/>
</dbReference>
<dbReference type="Gene3D" id="2.40.50.140">
    <property type="entry name" value="Nucleic acid-binding proteins"/>
    <property type="match status" value="1"/>
</dbReference>
<dbReference type="HAMAP" id="MF_00075">
    <property type="entry name" value="IF_1"/>
    <property type="match status" value="1"/>
</dbReference>
<dbReference type="InterPro" id="IPR012340">
    <property type="entry name" value="NA-bd_OB-fold"/>
</dbReference>
<dbReference type="InterPro" id="IPR006196">
    <property type="entry name" value="RNA-binding_domain_S1_IF1"/>
</dbReference>
<dbReference type="InterPro" id="IPR003029">
    <property type="entry name" value="S1_domain"/>
</dbReference>
<dbReference type="InterPro" id="IPR004368">
    <property type="entry name" value="TIF_IF1"/>
</dbReference>
<dbReference type="NCBIfam" id="TIGR00008">
    <property type="entry name" value="infA"/>
    <property type="match status" value="1"/>
</dbReference>
<dbReference type="PANTHER" id="PTHR33370">
    <property type="entry name" value="TRANSLATION INITIATION FACTOR IF-1, CHLOROPLASTIC"/>
    <property type="match status" value="1"/>
</dbReference>
<dbReference type="PANTHER" id="PTHR33370:SF1">
    <property type="entry name" value="TRANSLATION INITIATION FACTOR IF-1, CHLOROPLASTIC"/>
    <property type="match status" value="1"/>
</dbReference>
<dbReference type="Pfam" id="PF01176">
    <property type="entry name" value="eIF-1a"/>
    <property type="match status" value="1"/>
</dbReference>
<dbReference type="SMART" id="SM00316">
    <property type="entry name" value="S1"/>
    <property type="match status" value="1"/>
</dbReference>
<dbReference type="SUPFAM" id="SSF50249">
    <property type="entry name" value="Nucleic acid-binding proteins"/>
    <property type="match status" value="1"/>
</dbReference>
<dbReference type="PROSITE" id="PS50832">
    <property type="entry name" value="S1_IF1_TYPE"/>
    <property type="match status" value="1"/>
</dbReference>
<keyword id="KW-0963">Cytoplasm</keyword>
<keyword id="KW-0396">Initiation factor</keyword>
<keyword id="KW-0648">Protein biosynthesis</keyword>
<keyword id="KW-0694">RNA-binding</keyword>
<keyword id="KW-0699">rRNA-binding</keyword>
<comment type="function">
    <text evidence="1">One of the essential components for the initiation of protein synthesis. Stabilizes the binding of IF-2 and IF-3 on the 30S subunit to which N-formylmethionyl-tRNA(fMet) subsequently binds. Helps modulate mRNA selection, yielding the 30S pre-initiation complex (PIC). Upon addition of the 50S ribosomal subunit IF-1, IF-2 and IF-3 are released leaving the mature 70S translation initiation complex.</text>
</comment>
<comment type="subunit">
    <text evidence="1">Component of the 30S ribosomal translation pre-initiation complex which assembles on the 30S ribosome in the order IF-2 and IF-3, IF-1 and N-formylmethionyl-tRNA(fMet); mRNA recruitment can occur at any time during PIC assembly.</text>
</comment>
<comment type="subcellular location">
    <subcellularLocation>
        <location evidence="1">Cytoplasm</location>
    </subcellularLocation>
</comment>
<comment type="similarity">
    <text evidence="1">Belongs to the IF-1 family.</text>
</comment>
<comment type="sequence caution" evidence="2">
    <conflict type="erroneous initiation">
        <sequence resource="EMBL-CDS" id="AAL52852"/>
    </conflict>
    <text>Extended N-terminus.</text>
</comment>
<sequence>MAKEEVLEFPGVVTELLPNAMFRVKLENEHEIIAHTAGRMRKNRIRVLAGDKVLVEMTPYDLTKGRITYRFK</sequence>
<proteinExistence type="inferred from homology"/>
<gene>
    <name evidence="1" type="primary">infA</name>
    <name type="ordered locus">BMEI1671</name>
</gene>
<accession>P62923</accession>
<accession>Q8YF56</accession>
<accession>Q9ACA6</accession>
<evidence type="ECO:0000255" key="1">
    <source>
        <dbReference type="HAMAP-Rule" id="MF_00075"/>
    </source>
</evidence>
<evidence type="ECO:0000305" key="2"/>
<reference key="1">
    <citation type="journal article" date="2002" name="Proc. Natl. Acad. Sci. U.S.A.">
        <title>The genome sequence of the facultative intracellular pathogen Brucella melitensis.</title>
        <authorList>
            <person name="DelVecchio V.G."/>
            <person name="Kapatral V."/>
            <person name="Redkar R.J."/>
            <person name="Patra G."/>
            <person name="Mujer C."/>
            <person name="Los T."/>
            <person name="Ivanova N."/>
            <person name="Anderson I."/>
            <person name="Bhattacharyya A."/>
            <person name="Lykidis A."/>
            <person name="Reznik G."/>
            <person name="Jablonski L."/>
            <person name="Larsen N."/>
            <person name="D'Souza M."/>
            <person name="Bernal A."/>
            <person name="Mazur M."/>
            <person name="Goltsman E."/>
            <person name="Selkov E."/>
            <person name="Elzer P.H."/>
            <person name="Hagius S."/>
            <person name="O'Callaghan D."/>
            <person name="Letesson J.-J."/>
            <person name="Haselkorn R."/>
            <person name="Kyrpides N.C."/>
            <person name="Overbeek R."/>
        </authorList>
    </citation>
    <scope>NUCLEOTIDE SEQUENCE [LARGE SCALE GENOMIC DNA]</scope>
    <source>
        <strain>ATCC 23456 / CCUG 17765 / NCTC 10094 / 16M</strain>
    </source>
</reference>
<feature type="chain" id="PRO_0000095754" description="Translation initiation factor IF-1">
    <location>
        <begin position="1"/>
        <end position="72"/>
    </location>
</feature>
<feature type="domain" description="S1-like" evidence="1">
    <location>
        <begin position="1"/>
        <end position="72"/>
    </location>
</feature>